<keyword id="KW-0030">Aminoacyl-tRNA synthetase</keyword>
<keyword id="KW-0067">ATP-binding</keyword>
<keyword id="KW-0963">Cytoplasm</keyword>
<keyword id="KW-0436">Ligase</keyword>
<keyword id="KW-0547">Nucleotide-binding</keyword>
<keyword id="KW-0648">Protein biosynthesis</keyword>
<feature type="chain" id="PRO_1000087838" description="Proline--tRNA ligase">
    <location>
        <begin position="1"/>
        <end position="569"/>
    </location>
</feature>
<comment type="function">
    <text evidence="1">Catalyzes the attachment of proline to tRNA(Pro) in a two-step reaction: proline is first activated by ATP to form Pro-AMP and then transferred to the acceptor end of tRNA(Pro). As ProRS can inadvertently accommodate and process non-cognate amino acids such as alanine and cysteine, to avoid such errors it has two additional distinct editing activities against alanine. One activity is designated as 'pretransfer' editing and involves the tRNA(Pro)-independent hydrolysis of activated Ala-AMP. The other activity is designated 'posttransfer' editing and involves deacylation of mischarged Ala-tRNA(Pro). The misacylated Cys-tRNA(Pro) is not edited by ProRS.</text>
</comment>
<comment type="catalytic activity">
    <reaction evidence="1">
        <text>tRNA(Pro) + L-proline + ATP = L-prolyl-tRNA(Pro) + AMP + diphosphate</text>
        <dbReference type="Rhea" id="RHEA:14305"/>
        <dbReference type="Rhea" id="RHEA-COMP:9700"/>
        <dbReference type="Rhea" id="RHEA-COMP:9702"/>
        <dbReference type="ChEBI" id="CHEBI:30616"/>
        <dbReference type="ChEBI" id="CHEBI:33019"/>
        <dbReference type="ChEBI" id="CHEBI:60039"/>
        <dbReference type="ChEBI" id="CHEBI:78442"/>
        <dbReference type="ChEBI" id="CHEBI:78532"/>
        <dbReference type="ChEBI" id="CHEBI:456215"/>
        <dbReference type="EC" id="6.1.1.15"/>
    </reaction>
</comment>
<comment type="subunit">
    <text evidence="1">Homodimer.</text>
</comment>
<comment type="subcellular location">
    <subcellularLocation>
        <location evidence="1">Cytoplasm</location>
    </subcellularLocation>
</comment>
<comment type="domain">
    <text evidence="1">Consists of three domains: the N-terminal catalytic domain, the editing domain and the C-terminal anticodon-binding domain.</text>
</comment>
<comment type="similarity">
    <text evidence="1">Belongs to the class-II aminoacyl-tRNA synthetase family. ProS type 1 subfamily.</text>
</comment>
<accession>A5FS84</accession>
<proteinExistence type="inferred from homology"/>
<protein>
    <recommendedName>
        <fullName evidence="1">Proline--tRNA ligase</fullName>
        <ecNumber evidence="1">6.1.1.15</ecNumber>
    </recommendedName>
    <alternativeName>
        <fullName evidence="1">Prolyl-tRNA synthetase</fullName>
        <shortName evidence="1">ProRS</shortName>
    </alternativeName>
</protein>
<gene>
    <name evidence="1" type="primary">proS</name>
    <name type="ordered locus">DehaBAV1_0350</name>
</gene>
<evidence type="ECO:0000255" key="1">
    <source>
        <dbReference type="HAMAP-Rule" id="MF_01569"/>
    </source>
</evidence>
<reference key="1">
    <citation type="submission" date="2007-05" db="EMBL/GenBank/DDBJ databases">
        <title>Complete sequence of Dehalococcoides sp. BAV1.</title>
        <authorList>
            <consortium name="US DOE Joint Genome Institute"/>
            <person name="Copeland A."/>
            <person name="Lucas S."/>
            <person name="Lapidus A."/>
            <person name="Barry K."/>
            <person name="Detter J.C."/>
            <person name="Glavina del Rio T."/>
            <person name="Hammon N."/>
            <person name="Israni S."/>
            <person name="Pitluck S."/>
            <person name="Lowry S."/>
            <person name="Clum A."/>
            <person name="Schmutz J."/>
            <person name="Larimer F."/>
            <person name="Land M."/>
            <person name="Hauser L."/>
            <person name="Kyrpides N."/>
            <person name="Kim E."/>
            <person name="Ritalahti K.M."/>
            <person name="Loeffler F."/>
            <person name="Richardson P."/>
        </authorList>
    </citation>
    <scope>NUCLEOTIDE SEQUENCE [LARGE SCALE GENOMIC DNA]</scope>
    <source>
        <strain>ATCC BAA-2100 / JCM 16839 / KCTC 5957 / BAV1</strain>
    </source>
</reference>
<name>SYP_DEHMB</name>
<sequence length="569" mass="63105">MRYSRLFGKTQREIPSDAETISHQLLLRSGMIAQLTAGVYSFMPLAWRSIQKIETIIRQEMNKAGCQELAMPVLQPVEIWQQSGREAPFGQTLFHLKDRKDRNLVLGPTHEEVITDLASRYIQSYRDLPQRLYQIQAKFRDEPRPRGGLIRVREFIMKDMYSFDASPEGLDDSYQTMKQAYESVYRRCGLESMVIDADSGAIGGKASHEFMIVAESGEDSIIYCPKCSYAANAEKAVFKKKTLSKETLKDLEEVATPGQKAISDVARFLAVKPENTLKAVFYMADGKFVMAVIRGDLDINEVKLKNLLKCNDLRLAEDGEVKAAGVVAGSASPVGLKNILIVADDSVENGSNFVAGANKDGFHLKNVNCGRDFRADKMADIALAAEGSACPFCDGTFASKRGVEVGHIFKLGTFLSERFGANFTDAEGVSHPIIMGCYGMGVGRLLAAAIEQNHDEKGIIWPMPIAPYQVYICGLFLDNPVVRESAEKIYKELEAKSIEVLFDDRELTAGVKFNDADLLGIPLRLTISPRNLDKGGVEFKLRRNKESELVPLDSIVERVIATIKSESDL</sequence>
<organism>
    <name type="scientific">Dehalococcoides mccartyi (strain ATCC BAA-2100 / JCM 16839 / KCTC 5957 / BAV1)</name>
    <dbReference type="NCBI Taxonomy" id="216389"/>
    <lineage>
        <taxon>Bacteria</taxon>
        <taxon>Bacillati</taxon>
        <taxon>Chloroflexota</taxon>
        <taxon>Dehalococcoidia</taxon>
        <taxon>Dehalococcoidales</taxon>
        <taxon>Dehalococcoidaceae</taxon>
        <taxon>Dehalococcoides</taxon>
    </lineage>
</organism>
<dbReference type="EC" id="6.1.1.15" evidence="1"/>
<dbReference type="EMBL" id="CP000688">
    <property type="protein sequence ID" value="ABQ16935.1"/>
    <property type="molecule type" value="Genomic_DNA"/>
</dbReference>
<dbReference type="SMR" id="A5FS84"/>
<dbReference type="KEGG" id="deb:DehaBAV1_0350"/>
<dbReference type="PATRIC" id="fig|216389.18.peg.389"/>
<dbReference type="HOGENOM" id="CLU_016739_0_0_0"/>
<dbReference type="GO" id="GO:0005829">
    <property type="term" value="C:cytosol"/>
    <property type="evidence" value="ECO:0007669"/>
    <property type="project" value="TreeGrafter"/>
</dbReference>
<dbReference type="GO" id="GO:0002161">
    <property type="term" value="F:aminoacyl-tRNA deacylase activity"/>
    <property type="evidence" value="ECO:0007669"/>
    <property type="project" value="InterPro"/>
</dbReference>
<dbReference type="GO" id="GO:0005524">
    <property type="term" value="F:ATP binding"/>
    <property type="evidence" value="ECO:0007669"/>
    <property type="project" value="UniProtKB-UniRule"/>
</dbReference>
<dbReference type="GO" id="GO:0004827">
    <property type="term" value="F:proline-tRNA ligase activity"/>
    <property type="evidence" value="ECO:0007669"/>
    <property type="project" value="UniProtKB-UniRule"/>
</dbReference>
<dbReference type="GO" id="GO:0006433">
    <property type="term" value="P:prolyl-tRNA aminoacylation"/>
    <property type="evidence" value="ECO:0007669"/>
    <property type="project" value="UniProtKB-UniRule"/>
</dbReference>
<dbReference type="CDD" id="cd04334">
    <property type="entry name" value="ProRS-INS"/>
    <property type="match status" value="1"/>
</dbReference>
<dbReference type="CDD" id="cd00861">
    <property type="entry name" value="ProRS_anticodon_short"/>
    <property type="match status" value="1"/>
</dbReference>
<dbReference type="CDD" id="cd00779">
    <property type="entry name" value="ProRS_core_prok"/>
    <property type="match status" value="1"/>
</dbReference>
<dbReference type="Gene3D" id="3.40.50.800">
    <property type="entry name" value="Anticodon-binding domain"/>
    <property type="match status" value="1"/>
</dbReference>
<dbReference type="Gene3D" id="3.30.930.10">
    <property type="entry name" value="Bira Bifunctional Protein, Domain 2"/>
    <property type="match status" value="2"/>
</dbReference>
<dbReference type="HAMAP" id="MF_01569">
    <property type="entry name" value="Pro_tRNA_synth_type1"/>
    <property type="match status" value="1"/>
</dbReference>
<dbReference type="InterPro" id="IPR002314">
    <property type="entry name" value="aa-tRNA-synt_IIb"/>
</dbReference>
<dbReference type="InterPro" id="IPR006195">
    <property type="entry name" value="aa-tRNA-synth_II"/>
</dbReference>
<dbReference type="InterPro" id="IPR045864">
    <property type="entry name" value="aa-tRNA-synth_II/BPL/LPL"/>
</dbReference>
<dbReference type="InterPro" id="IPR004154">
    <property type="entry name" value="Anticodon-bd"/>
</dbReference>
<dbReference type="InterPro" id="IPR036621">
    <property type="entry name" value="Anticodon-bd_dom_sf"/>
</dbReference>
<dbReference type="InterPro" id="IPR002316">
    <property type="entry name" value="Pro-tRNA-ligase_IIa"/>
</dbReference>
<dbReference type="InterPro" id="IPR004500">
    <property type="entry name" value="Pro-tRNA-synth_IIa_bac-type"/>
</dbReference>
<dbReference type="InterPro" id="IPR023717">
    <property type="entry name" value="Pro-tRNA-Synthase_IIa_type1"/>
</dbReference>
<dbReference type="InterPro" id="IPR050062">
    <property type="entry name" value="Pro-tRNA_synthetase"/>
</dbReference>
<dbReference type="InterPro" id="IPR044140">
    <property type="entry name" value="ProRS_anticodon_short"/>
</dbReference>
<dbReference type="InterPro" id="IPR033730">
    <property type="entry name" value="ProRS_core_prok"/>
</dbReference>
<dbReference type="InterPro" id="IPR036754">
    <property type="entry name" value="YbaK/aa-tRNA-synt-asso_dom_sf"/>
</dbReference>
<dbReference type="InterPro" id="IPR007214">
    <property type="entry name" value="YbaK/aa-tRNA-synth-assoc-dom"/>
</dbReference>
<dbReference type="NCBIfam" id="NF006625">
    <property type="entry name" value="PRK09194.1"/>
    <property type="match status" value="1"/>
</dbReference>
<dbReference type="NCBIfam" id="TIGR00409">
    <property type="entry name" value="proS_fam_II"/>
    <property type="match status" value="1"/>
</dbReference>
<dbReference type="PANTHER" id="PTHR42753">
    <property type="entry name" value="MITOCHONDRIAL RIBOSOME PROTEIN L39/PROLYL-TRNA LIGASE FAMILY MEMBER"/>
    <property type="match status" value="1"/>
</dbReference>
<dbReference type="PANTHER" id="PTHR42753:SF2">
    <property type="entry name" value="PROLINE--TRNA LIGASE"/>
    <property type="match status" value="1"/>
</dbReference>
<dbReference type="Pfam" id="PF03129">
    <property type="entry name" value="HGTP_anticodon"/>
    <property type="match status" value="1"/>
</dbReference>
<dbReference type="Pfam" id="PF00587">
    <property type="entry name" value="tRNA-synt_2b"/>
    <property type="match status" value="1"/>
</dbReference>
<dbReference type="Pfam" id="PF04073">
    <property type="entry name" value="tRNA_edit"/>
    <property type="match status" value="1"/>
</dbReference>
<dbReference type="PRINTS" id="PR01046">
    <property type="entry name" value="TRNASYNTHPRO"/>
</dbReference>
<dbReference type="SUPFAM" id="SSF52954">
    <property type="entry name" value="Class II aaRS ABD-related"/>
    <property type="match status" value="1"/>
</dbReference>
<dbReference type="SUPFAM" id="SSF55681">
    <property type="entry name" value="Class II aaRS and biotin synthetases"/>
    <property type="match status" value="1"/>
</dbReference>
<dbReference type="SUPFAM" id="SSF55826">
    <property type="entry name" value="YbaK/ProRS associated domain"/>
    <property type="match status" value="1"/>
</dbReference>
<dbReference type="PROSITE" id="PS50862">
    <property type="entry name" value="AA_TRNA_LIGASE_II"/>
    <property type="match status" value="1"/>
</dbReference>